<proteinExistence type="inferred from homology"/>
<evidence type="ECO:0000250" key="1">
    <source>
        <dbReference type="UniProtKB" id="P49913"/>
    </source>
</evidence>
<evidence type="ECO:0000250" key="2">
    <source>
        <dbReference type="UniProtKB" id="P54229"/>
    </source>
</evidence>
<evidence type="ECO:0000255" key="3"/>
<evidence type="ECO:0000305" key="4"/>
<comment type="function">
    <text evidence="1">Antimicrobial protein that is an integral component of the innate immune system (By similarity). Binds to bacterial lipopolysaccharides (LPS) (By similarity). Acts via neutrophil N-formyl peptide receptors to enhance the release of CXCL2 (By similarity). Postsecretory processing generates multiple cathelicidin antimicrobial peptides with various lengths which act as a topical antimicrobial defense in sweat on skin (By similarity). The unprocessed precursor form, cathelicidin antimicrobial peptide, inhibits the growth of Gram-negative E.coli and E.aerogenes with efficiencies comparable to that of the mature peptide LL-37 (in vitro) (By similarity).</text>
</comment>
<comment type="function">
    <molecule>Antibacterial peptide LL-37</molecule>
    <text evidence="1">Antimicrobial peptide that is an integral component of the innate immune system (By similarity). Binds to bacterial lipopolysaccharides (LPS) (By similarity). Causes membrane permeabilization by forming transmembrane pores (in vitro) (By similarity). Causes lysis of E.coli (By similarity). Exhibits antimicrobial activity against Gram-negative bacteria such as P.aeruginosa, S.typhimurium, E.aerogenes, E.coli and P.syringae, Gram-positive bacteria such as L.monocytogenes, S.epidermidis, S.pyogenes and S.aureus, as well as vancomycin-resistant enterococci (in vitro) (By similarity). Exhibits antimicrobial activity against methicillin-resistant S.aureus, P.mirabilis, and C.albicans in low-salt media, but not in media containing 100 mM NaCl (in vitro) (By similarity). Forms chiral supramolecular assemblies with quinolone signal (PQS) molecules of P.aeruginosa, which may lead to interference of bacterial quorum signaling and perturbance of bacterial biofilm formation (By similarity). May form supramolecular fiber-like assemblies on bacterial membranes (By similarity). Induces cytokine and chemokine producation as well as TNF/TNFA and CSF2/GMCSF production in normal human keratinocytes (By similarity). Exhibits hemolytic activity against red blood cells (By similarity).</text>
</comment>
<comment type="function">
    <molecule>Antibacterial peptide FALL-39</molecule>
    <text evidence="1">Exhibits antimicrobial activity against E.coli and B.megaterium (in vitro).</text>
</comment>
<comment type="subunit">
    <molecule>Antibacterial peptide LL-37</molecule>
    <text evidence="1">Monomer, homodimer or homotrimer (in vitro) (By similarity). Oligomerizes as tetra- or hexamer in solution (in vitro) (By similarity).</text>
</comment>
<comment type="subcellular location">
    <subcellularLocation>
        <location evidence="2">Secreted</location>
    </subcellularLocation>
    <subcellularLocation>
        <location evidence="2">Vesicle</location>
    </subcellularLocation>
    <text evidence="2">Stored as pro-peptide in granules and phagolysosomes of neutrophils (By similarity). Secreted in sweat onto skin (By similarity).</text>
</comment>
<comment type="domain">
    <text evidence="2">The cathelin-like domain (CLD), which is the propeptide part, does not seem to exhibit auto-inhibitory function, as it does not inhibit the antibacterial activity of antibacterial peptide LL-37.</text>
</comment>
<comment type="domain">
    <molecule>Antibacterial peptide LL-37</molecule>
    <text evidence="2">Undergoes conformational change in the presence of lipid A, transitioning from a random coil to an alpha-helical structure.</text>
</comment>
<comment type="domain">
    <molecule>Antibacterial peptide LL-37</molecule>
    <text evidence="2">Residues 17-29 of LL-37 represent the active core of the antimicrobial peptide. Forms ribbon-like fibrils and exhibits antibacterial activity against Gram-positive M.luteus (By similarity). Also exhibits antibacterial activity against Gram-negative E.coli and P.fluorescens (By similarity).</text>
</comment>
<comment type="PTM">
    <text evidence="1">Proteolytically cleaved by proteinase PRTN3 into antibacterial peptide LL-37 (By similarity). Proteolytically cleaved by cathepsin CTSG and neutrophil elastase ELANE (By similarity).</text>
</comment>
<comment type="PTM">
    <molecule>Antibacterial peptide LL-37</molecule>
    <text evidence="1">Resistant to proteolytic degradation in solution, and when bound to both zwitterionic (mimicking mammalian membranes) and negatively charged membranes (mimicking bacterial membranes).</text>
</comment>
<comment type="PTM">
    <text evidence="1">After secretion onto the skin surface, the CAMP gene product is processed by a serine protease-dependent mechanism into multiple novel antimicrobial peptides distinct from and shorter than cathelicidin LL-37 (By similarity). These peptides show enhanced antimicrobial action, acquiring the ability to kill skin pathogens such as S.aureus, E.coli and C.albicans. These peptides have lost the ability to stimulate CXCL8/IL8 release from keratinocytes (By similarity). The peptides act synergistically, killing bacteria at lower concentrations when present together, and maintain activity at increased salt condition (By similarity).</text>
</comment>
<comment type="similarity">
    <text evidence="4">Belongs to the cathelicidin family.</text>
</comment>
<dbReference type="EMBL" id="DQ471365">
    <property type="protein sequence ID" value="ABE96629.1"/>
    <property type="molecule type" value="Genomic_DNA"/>
</dbReference>
<dbReference type="SMR" id="Q1KLX7"/>
<dbReference type="STRING" id="9541.ENSMFAP00000019665"/>
<dbReference type="eggNOG" id="ENOG502SAES">
    <property type="taxonomic scope" value="Eukaryota"/>
</dbReference>
<dbReference type="Proteomes" id="UP000233100">
    <property type="component" value="Unplaced"/>
</dbReference>
<dbReference type="GO" id="GO:0005615">
    <property type="term" value="C:extracellular space"/>
    <property type="evidence" value="ECO:0007669"/>
    <property type="project" value="TreeGrafter"/>
</dbReference>
<dbReference type="GO" id="GO:0031982">
    <property type="term" value="C:vesicle"/>
    <property type="evidence" value="ECO:0007669"/>
    <property type="project" value="UniProtKB-SubCell"/>
</dbReference>
<dbReference type="GO" id="GO:0001530">
    <property type="term" value="F:lipopolysaccharide binding"/>
    <property type="evidence" value="ECO:0007669"/>
    <property type="project" value="TreeGrafter"/>
</dbReference>
<dbReference type="GO" id="GO:0061844">
    <property type="term" value="P:antimicrobial humoral immune response mediated by antimicrobial peptide"/>
    <property type="evidence" value="ECO:0007669"/>
    <property type="project" value="TreeGrafter"/>
</dbReference>
<dbReference type="GO" id="GO:0050829">
    <property type="term" value="P:defense response to Gram-negative bacterium"/>
    <property type="evidence" value="ECO:0007669"/>
    <property type="project" value="TreeGrafter"/>
</dbReference>
<dbReference type="GO" id="GO:0050830">
    <property type="term" value="P:defense response to Gram-positive bacterium"/>
    <property type="evidence" value="ECO:0007669"/>
    <property type="project" value="TreeGrafter"/>
</dbReference>
<dbReference type="GO" id="GO:0045087">
    <property type="term" value="P:innate immune response"/>
    <property type="evidence" value="ECO:0007669"/>
    <property type="project" value="UniProtKB-KW"/>
</dbReference>
<dbReference type="GO" id="GO:0042119">
    <property type="term" value="P:neutrophil activation"/>
    <property type="evidence" value="ECO:0000250"/>
    <property type="project" value="UniProtKB"/>
</dbReference>
<dbReference type="FunFam" id="3.10.450.10:FF:000003">
    <property type="entry name" value="Cathelicidin antimicrobial peptide"/>
    <property type="match status" value="1"/>
</dbReference>
<dbReference type="Gene3D" id="3.10.450.10">
    <property type="match status" value="1"/>
</dbReference>
<dbReference type="InterPro" id="IPR001894">
    <property type="entry name" value="Cathelicidin-like"/>
</dbReference>
<dbReference type="InterPro" id="IPR018216">
    <property type="entry name" value="Cathelicidin_CS"/>
</dbReference>
<dbReference type="InterPro" id="IPR022746">
    <property type="entry name" value="Cathlecidin_C"/>
</dbReference>
<dbReference type="InterPro" id="IPR046350">
    <property type="entry name" value="Cystatin_sf"/>
</dbReference>
<dbReference type="PANTHER" id="PTHR10206">
    <property type="entry name" value="CATHELICIDIN"/>
    <property type="match status" value="1"/>
</dbReference>
<dbReference type="PANTHER" id="PTHR10206:SF2">
    <property type="entry name" value="CATHELICIDIN ANTIMICROBIAL PEPTIDE"/>
    <property type="match status" value="1"/>
</dbReference>
<dbReference type="Pfam" id="PF12153">
    <property type="entry name" value="CAP18_C"/>
    <property type="match status" value="1"/>
</dbReference>
<dbReference type="Pfam" id="PF00666">
    <property type="entry name" value="Cathelicidins"/>
    <property type="match status" value="1"/>
</dbReference>
<dbReference type="SUPFAM" id="SSF54403">
    <property type="entry name" value="Cystatin/monellin"/>
    <property type="match status" value="1"/>
</dbReference>
<dbReference type="PROSITE" id="PS00946">
    <property type="entry name" value="CATHELICIDINS_1"/>
    <property type="match status" value="1"/>
</dbReference>
<dbReference type="PROSITE" id="PS00947">
    <property type="entry name" value="CATHELICIDINS_2"/>
    <property type="match status" value="1"/>
</dbReference>
<sequence>MKTQRDSPSLGRWSLVLLLLGLVMPLAIVAQVLSYQEAVLRAIDGINQRSSDANLYRLLDLDPRPTMDGDPDTPKPVSFTVKETVCPRTTQKSPEDCDFKEDGLVKRCVGTVILNQARDSFDISCDKDNRRSARLGNFFRKVKEKIGGGLKKVGQKIKDFLGNLVPRTAS</sequence>
<accession>Q1KLX7</accession>
<reference key="1">
    <citation type="journal article" date="2006" name="J. Biol. Chem.">
        <title>Evolution of the primate cathelicidin. Correlation between structural variations and antimicrobial activity.</title>
        <authorList>
            <person name="Zelezetsky I."/>
            <person name="Pontillo A."/>
            <person name="Puzzi L."/>
            <person name="Antcheva N."/>
            <person name="Segat L."/>
            <person name="Pacor S."/>
            <person name="Crovella S."/>
            <person name="Tossi A."/>
        </authorList>
    </citation>
    <scope>NUCLEOTIDE SEQUENCE [GENOMIC DNA]</scope>
</reference>
<gene>
    <name evidence="1" type="primary">CAMP</name>
</gene>
<feature type="signal peptide" evidence="3">
    <location>
        <begin position="1"/>
        <end position="30"/>
    </location>
</feature>
<feature type="propeptide" id="PRO_0000251764" description="Cathelin-like domain (CLD)" evidence="1">
    <location>
        <begin position="31"/>
        <end position="131"/>
    </location>
</feature>
<feature type="peptide" id="PRO_0000251765" description="Antibacterial peptide FALL-39">
    <location>
        <begin position="132"/>
        <end position="170"/>
    </location>
</feature>
<feature type="peptide" id="PRO_0000251766" description="Antibacterial peptide LL-37">
    <location>
        <begin position="134"/>
        <end position="170"/>
    </location>
</feature>
<feature type="region of interest" description="Active core" evidence="1">
    <location>
        <begin position="150"/>
        <end position="162"/>
    </location>
</feature>
<feature type="disulfide bond" evidence="1">
    <location>
        <begin position="86"/>
        <end position="97"/>
    </location>
</feature>
<feature type="disulfide bond" evidence="1">
    <location>
        <begin position="108"/>
        <end position="125"/>
    </location>
</feature>
<organism>
    <name type="scientific">Macaca fascicularis</name>
    <name type="common">Crab-eating macaque</name>
    <name type="synonym">Cynomolgus monkey</name>
    <dbReference type="NCBI Taxonomy" id="9541"/>
    <lineage>
        <taxon>Eukaryota</taxon>
        <taxon>Metazoa</taxon>
        <taxon>Chordata</taxon>
        <taxon>Craniata</taxon>
        <taxon>Vertebrata</taxon>
        <taxon>Euteleostomi</taxon>
        <taxon>Mammalia</taxon>
        <taxon>Eutheria</taxon>
        <taxon>Euarchontoglires</taxon>
        <taxon>Primates</taxon>
        <taxon>Haplorrhini</taxon>
        <taxon>Catarrhini</taxon>
        <taxon>Cercopithecidae</taxon>
        <taxon>Cercopithecinae</taxon>
        <taxon>Macaca</taxon>
    </lineage>
</organism>
<name>CAMP_MACFA</name>
<protein>
    <recommendedName>
        <fullName evidence="1">Cathelicidin antimicrobial peptide</fullName>
    </recommendedName>
    <component>
        <recommendedName>
            <fullName evidence="1">Antibacterial peptide FALL-39</fullName>
        </recommendedName>
        <alternativeName>
            <fullName evidence="1">FALL-39 peptide antibiotic</fullName>
        </alternativeName>
    </component>
    <component>
        <recommendedName>
            <fullName evidence="1">Antibacterial peptide LL-37</fullName>
        </recommendedName>
    </component>
</protein>
<keyword id="KW-0044">Antibiotic</keyword>
<keyword id="KW-0929">Antimicrobial</keyword>
<keyword id="KW-0165">Cleavage on pair of basic residues</keyword>
<keyword id="KW-1015">Disulfide bond</keyword>
<keyword id="KW-0391">Immunity</keyword>
<keyword id="KW-0399">Innate immunity</keyword>
<keyword id="KW-1185">Reference proteome</keyword>
<keyword id="KW-0964">Secreted</keyword>
<keyword id="KW-0732">Signal</keyword>